<comment type="function">
    <text evidence="1">Is an aliphatic amidase with a restricted substrate specificity, as it only hydrolyzes formamide.</text>
</comment>
<comment type="catalytic activity">
    <reaction evidence="1">
        <text>formamide + H2O = formate + NH4(+)</text>
        <dbReference type="Rhea" id="RHEA:21948"/>
        <dbReference type="ChEBI" id="CHEBI:15377"/>
        <dbReference type="ChEBI" id="CHEBI:15740"/>
        <dbReference type="ChEBI" id="CHEBI:16397"/>
        <dbReference type="ChEBI" id="CHEBI:28938"/>
        <dbReference type="EC" id="3.5.1.49"/>
    </reaction>
</comment>
<comment type="similarity">
    <text evidence="1">Belongs to the carbon-nitrogen hydrolase superfamily. Aliphatic amidase family.</text>
</comment>
<name>AMIF_NITV4</name>
<proteinExistence type="inferred from homology"/>
<organism>
    <name type="scientific">Nitratidesulfovibrio vulgaris (strain DP4)</name>
    <name type="common">Desulfovibrio vulgaris</name>
    <dbReference type="NCBI Taxonomy" id="391774"/>
    <lineage>
        <taxon>Bacteria</taxon>
        <taxon>Pseudomonadati</taxon>
        <taxon>Thermodesulfobacteriota</taxon>
        <taxon>Desulfovibrionia</taxon>
        <taxon>Desulfovibrionales</taxon>
        <taxon>Desulfovibrionaceae</taxon>
        <taxon>Nitratidesulfovibrio</taxon>
    </lineage>
</organism>
<feature type="chain" id="PRO_1000067059" description="Formamidase">
    <location>
        <begin position="1"/>
        <end position="334"/>
    </location>
</feature>
<feature type="domain" description="CN hydrolase" evidence="2">
    <location>
        <begin position="14"/>
        <end position="260"/>
    </location>
</feature>
<feature type="active site" description="Proton acceptor" evidence="1">
    <location>
        <position position="60"/>
    </location>
</feature>
<feature type="active site" description="Proton donor" evidence="1">
    <location>
        <position position="133"/>
    </location>
</feature>
<feature type="active site" description="Nucleophile" evidence="1">
    <location>
        <position position="166"/>
    </location>
</feature>
<keyword id="KW-0378">Hydrolase</keyword>
<reference key="1">
    <citation type="journal article" date="2009" name="Environ. Microbiol.">
        <title>Contribution of mobile genetic elements to Desulfovibrio vulgaris genome plasticity.</title>
        <authorList>
            <person name="Walker C.B."/>
            <person name="Stolyar S."/>
            <person name="Chivian D."/>
            <person name="Pinel N."/>
            <person name="Gabster J.A."/>
            <person name="Dehal P.S."/>
            <person name="He Z."/>
            <person name="Yang Z.K."/>
            <person name="Yen H.C."/>
            <person name="Zhou J."/>
            <person name="Wall J.D."/>
            <person name="Hazen T.C."/>
            <person name="Arkin A.P."/>
            <person name="Stahl D.A."/>
        </authorList>
    </citation>
    <scope>NUCLEOTIDE SEQUENCE [LARGE SCALE GENOMIC DNA]</scope>
    <source>
        <strain>DP4</strain>
    </source>
</reference>
<gene>
    <name evidence="1" type="primary">amiF</name>
    <name type="ordered locus">Dvul_1889</name>
</gene>
<dbReference type="EC" id="3.5.1.49" evidence="1"/>
<dbReference type="EMBL" id="CP000527">
    <property type="protein sequence ID" value="ABM28906.1"/>
    <property type="molecule type" value="Genomic_DNA"/>
</dbReference>
<dbReference type="RefSeq" id="WP_010938461.1">
    <property type="nucleotide sequence ID" value="NC_008751.1"/>
</dbReference>
<dbReference type="SMR" id="A1VEP0"/>
<dbReference type="KEGG" id="dvl:Dvul_1889"/>
<dbReference type="HOGENOM" id="CLU_071797_0_0_7"/>
<dbReference type="Proteomes" id="UP000009173">
    <property type="component" value="Chromosome"/>
</dbReference>
<dbReference type="GO" id="GO:0004328">
    <property type="term" value="F:formamidase activity"/>
    <property type="evidence" value="ECO:0007669"/>
    <property type="project" value="UniProtKB-UniRule"/>
</dbReference>
<dbReference type="GO" id="GO:0050126">
    <property type="term" value="F:N-carbamoylputrescine amidase activity"/>
    <property type="evidence" value="ECO:0007669"/>
    <property type="project" value="TreeGrafter"/>
</dbReference>
<dbReference type="GO" id="GO:0033388">
    <property type="term" value="P:putrescine biosynthetic process from arginine"/>
    <property type="evidence" value="ECO:0007669"/>
    <property type="project" value="TreeGrafter"/>
</dbReference>
<dbReference type="CDD" id="cd07565">
    <property type="entry name" value="aliphatic_amidase"/>
    <property type="match status" value="1"/>
</dbReference>
<dbReference type="Gene3D" id="3.60.110.10">
    <property type="entry name" value="Carbon-nitrogen hydrolase"/>
    <property type="match status" value="1"/>
</dbReference>
<dbReference type="HAMAP" id="MF_01243">
    <property type="entry name" value="Formamidase"/>
    <property type="match status" value="1"/>
</dbReference>
<dbReference type="InterPro" id="IPR050345">
    <property type="entry name" value="Aliph_Amidase/BUP"/>
</dbReference>
<dbReference type="InterPro" id="IPR003010">
    <property type="entry name" value="C-N_Hydrolase"/>
</dbReference>
<dbReference type="InterPro" id="IPR036526">
    <property type="entry name" value="C-N_Hydrolase_sf"/>
</dbReference>
<dbReference type="InterPro" id="IPR022843">
    <property type="entry name" value="Formamidase"/>
</dbReference>
<dbReference type="NCBIfam" id="NF009803">
    <property type="entry name" value="PRK13287.1"/>
    <property type="match status" value="1"/>
</dbReference>
<dbReference type="PANTHER" id="PTHR43674:SF15">
    <property type="entry name" value="FORMAMIDASE"/>
    <property type="match status" value="1"/>
</dbReference>
<dbReference type="PANTHER" id="PTHR43674">
    <property type="entry name" value="NITRILASE C965.09-RELATED"/>
    <property type="match status" value="1"/>
</dbReference>
<dbReference type="Pfam" id="PF00795">
    <property type="entry name" value="CN_hydrolase"/>
    <property type="match status" value="1"/>
</dbReference>
<dbReference type="SUPFAM" id="SSF56317">
    <property type="entry name" value="Carbon-nitrogen hydrolase"/>
    <property type="match status" value="1"/>
</dbReference>
<dbReference type="PROSITE" id="PS50263">
    <property type="entry name" value="CN_HYDROLASE"/>
    <property type="match status" value="1"/>
</dbReference>
<protein>
    <recommendedName>
        <fullName evidence="1">Formamidase</fullName>
        <ecNumber evidence="1">3.5.1.49</ecNumber>
    </recommendedName>
    <alternativeName>
        <fullName evidence="1">Formamide amidohydrolase</fullName>
    </alternativeName>
</protein>
<evidence type="ECO:0000255" key="1">
    <source>
        <dbReference type="HAMAP-Rule" id="MF_01243"/>
    </source>
</evidence>
<evidence type="ECO:0000255" key="2">
    <source>
        <dbReference type="PROSITE-ProRule" id="PRU00054"/>
    </source>
</evidence>
<sequence length="334" mass="37483">MGSIGSMNKPSEGMLMGLVQYPVPIVNSRRDIEASVDRICAATAATKAGYPGMDLIVWPEYSTQGLNTKKWVTEEFLMDVEEPLFQRYAQTCKENDVWGVFSIMERNPNKNQMPYNTAVIFNNKGELALKYRKLNPWVPIEPWMPGDLGQPVCDGPGGSKLSLCICHDGMFPEQAREAAYKGCNVYIRISGYSTQVNEQWILTNRSNAWHNLMYTAAVNLAGYDGVFYYFGEGQVCNFDGTTLVQGHRNPWEIVTAEVFPKMADQARTDWGLENNIFNVGTRGYVAHPGGVKDCPYTWVKDFAAGKYHLPWEDKIKIKDGSIYGYPTTGGRFGL</sequence>
<accession>A1VEP0</accession>